<feature type="chain" id="PRO_0000170453" description="Nucleoid-associated protein spyM18_1926">
    <location>
        <begin position="1"/>
        <end position="99"/>
    </location>
</feature>
<name>Y1926_STRP8</name>
<sequence>MMNMQNMMKQAQKLQKQMEQKQADLAAMQFTGKSAQDLVTATFTGDKKLVGIDFKEAVVDPEDVETLQDMTTQAINDALTQIDETTKKTLGAFAGKLPF</sequence>
<protein>
    <recommendedName>
        <fullName evidence="1">Nucleoid-associated protein spyM18_1926</fullName>
    </recommendedName>
</protein>
<comment type="function">
    <text evidence="1">Binds to DNA and alters its conformation. May be involved in regulation of gene expression, nucleoid organization and DNA protection.</text>
</comment>
<comment type="subunit">
    <text evidence="1">Homodimer.</text>
</comment>
<comment type="subcellular location">
    <subcellularLocation>
        <location evidence="1">Cytoplasm</location>
        <location evidence="1">Nucleoid</location>
    </subcellularLocation>
</comment>
<comment type="similarity">
    <text evidence="1">Belongs to the YbaB/EbfC family.</text>
</comment>
<gene>
    <name type="ordered locus">spyM18_1926</name>
</gene>
<proteinExistence type="inferred from homology"/>
<keyword id="KW-0963">Cytoplasm</keyword>
<keyword id="KW-0238">DNA-binding</keyword>
<evidence type="ECO:0000255" key="1">
    <source>
        <dbReference type="HAMAP-Rule" id="MF_00274"/>
    </source>
</evidence>
<dbReference type="EMBL" id="AE009949">
    <property type="protein sequence ID" value="AAL98424.1"/>
    <property type="molecule type" value="Genomic_DNA"/>
</dbReference>
<dbReference type="RefSeq" id="WP_010922643.1">
    <property type="nucleotide sequence ID" value="NC_003485.1"/>
</dbReference>
<dbReference type="SMR" id="P67269"/>
<dbReference type="KEGG" id="spm:spyM18_1926"/>
<dbReference type="HOGENOM" id="CLU_140930_1_1_9"/>
<dbReference type="GO" id="GO:0043590">
    <property type="term" value="C:bacterial nucleoid"/>
    <property type="evidence" value="ECO:0007669"/>
    <property type="project" value="UniProtKB-UniRule"/>
</dbReference>
<dbReference type="GO" id="GO:0005829">
    <property type="term" value="C:cytosol"/>
    <property type="evidence" value="ECO:0007669"/>
    <property type="project" value="TreeGrafter"/>
</dbReference>
<dbReference type="GO" id="GO:0003677">
    <property type="term" value="F:DNA binding"/>
    <property type="evidence" value="ECO:0007669"/>
    <property type="project" value="UniProtKB-UniRule"/>
</dbReference>
<dbReference type="Gene3D" id="3.30.1310.10">
    <property type="entry name" value="Nucleoid-associated protein YbaB-like domain"/>
    <property type="match status" value="1"/>
</dbReference>
<dbReference type="HAMAP" id="MF_00274">
    <property type="entry name" value="DNA_YbaB_EbfC"/>
    <property type="match status" value="1"/>
</dbReference>
<dbReference type="InterPro" id="IPR036894">
    <property type="entry name" value="YbaB-like_sf"/>
</dbReference>
<dbReference type="InterPro" id="IPR004401">
    <property type="entry name" value="YbaB/EbfC"/>
</dbReference>
<dbReference type="NCBIfam" id="TIGR00103">
    <property type="entry name" value="DNA_YbaB_EbfC"/>
    <property type="match status" value="1"/>
</dbReference>
<dbReference type="PANTHER" id="PTHR33449">
    <property type="entry name" value="NUCLEOID-ASSOCIATED PROTEIN YBAB"/>
    <property type="match status" value="1"/>
</dbReference>
<dbReference type="PANTHER" id="PTHR33449:SF1">
    <property type="entry name" value="NUCLEOID-ASSOCIATED PROTEIN YBAB"/>
    <property type="match status" value="1"/>
</dbReference>
<dbReference type="Pfam" id="PF02575">
    <property type="entry name" value="YbaB_DNA_bd"/>
    <property type="match status" value="1"/>
</dbReference>
<dbReference type="PIRSF" id="PIRSF004555">
    <property type="entry name" value="UCP004555"/>
    <property type="match status" value="1"/>
</dbReference>
<dbReference type="SUPFAM" id="SSF82607">
    <property type="entry name" value="YbaB-like"/>
    <property type="match status" value="1"/>
</dbReference>
<organism>
    <name type="scientific">Streptococcus pyogenes serotype M18 (strain MGAS8232)</name>
    <dbReference type="NCBI Taxonomy" id="186103"/>
    <lineage>
        <taxon>Bacteria</taxon>
        <taxon>Bacillati</taxon>
        <taxon>Bacillota</taxon>
        <taxon>Bacilli</taxon>
        <taxon>Lactobacillales</taxon>
        <taxon>Streptococcaceae</taxon>
        <taxon>Streptococcus</taxon>
    </lineage>
</organism>
<reference key="1">
    <citation type="journal article" date="2002" name="Proc. Natl. Acad. Sci. U.S.A.">
        <title>Genome sequence and comparative microarray analysis of serotype M18 group A Streptococcus strains associated with acute rheumatic fever outbreaks.</title>
        <authorList>
            <person name="Smoot J.C."/>
            <person name="Barbian K.D."/>
            <person name="Van Gompel J.J."/>
            <person name="Smoot L.M."/>
            <person name="Chaussee M.S."/>
            <person name="Sylva G.L."/>
            <person name="Sturdevant D.E."/>
            <person name="Ricklefs S.M."/>
            <person name="Porcella S.F."/>
            <person name="Parkins L.D."/>
            <person name="Beres S.B."/>
            <person name="Campbell D.S."/>
            <person name="Smith T.M."/>
            <person name="Zhang Q."/>
            <person name="Kapur V."/>
            <person name="Daly J.A."/>
            <person name="Veasy L.G."/>
            <person name="Musser J.M."/>
        </authorList>
    </citation>
    <scope>NUCLEOTIDE SEQUENCE [LARGE SCALE GENOMIC DNA]</scope>
    <source>
        <strain>MGAS8232</strain>
    </source>
</reference>
<accession>P67269</accession>
<accession>Q99Y56</accession>